<feature type="chain" id="PRO_0000246177" description="Forkhead box protein L2">
    <location>
        <begin position="1"/>
        <end position="377"/>
    </location>
</feature>
<feature type="DNA-binding region" description="Fork-head" evidence="3">
    <location>
        <begin position="55"/>
        <end position="149"/>
    </location>
</feature>
<feature type="region of interest" description="Disordered" evidence="4">
    <location>
        <begin position="1"/>
        <end position="54"/>
    </location>
</feature>
<feature type="region of interest" description="Disordered" evidence="4">
    <location>
        <begin position="277"/>
        <end position="338"/>
    </location>
</feature>
<feature type="compositionally biased region" description="Basic residues" evidence="4">
    <location>
        <begin position="291"/>
        <end position="301"/>
    </location>
</feature>
<feature type="compositionally biased region" description="Pro residues" evidence="4">
    <location>
        <begin position="305"/>
        <end position="322"/>
    </location>
</feature>
<feature type="modified residue" description="Phosphoserine" evidence="2">
    <location>
        <position position="34"/>
    </location>
</feature>
<feature type="cross-link" description="Glycyl lysine isopeptide (Lys-Gly) (interchain with G-Cter in SUMO)" evidence="1">
    <location>
        <position position="25"/>
    </location>
</feature>
<sequence length="377" mass="38887">MMASYPEPENASGALLAPETGRAAKEPEAPPPPSPGKGGGGGTGTAPEKPDPAQKPPYSYVALIAMAIRESAEKRLTLSGIYQYIIAKFPFYEKNKKGWQNSIRHNLSLNECFIKVPREGGGERKGNYWTLDPACEDMFEKGNYRRRRRMKRPFRPPPAHFQPGKGLFGAGGAAGGCGVAGAGADGYGYLAPPKYLQSGFLNNSWPLPQPPSPMPYASCQMAAAAAAAAAAAAAAGPGSPGAAAVVKGLAGPAASYGPYSRVQSMALPPGVVNSYNGLGGPPAAPPPPPHPHSHPHAHHLHAAAAPPPAPPHHGAAAPPPGQLSPASPATAAPPAPAPTNAPGLQFACARQPELAMMHCSYWDHDSKTGALHSRLDL</sequence>
<accession>Q6VFT7</accession>
<accession>Q8MIM2</accession>
<dbReference type="EMBL" id="AY340970">
    <property type="protein sequence ID" value="AAQ91844.1"/>
    <property type="molecule type" value="Genomic_DNA"/>
</dbReference>
<dbReference type="EMBL" id="AY116404">
    <property type="protein sequence ID" value="AAM77968.1"/>
    <property type="molecule type" value="mRNA"/>
</dbReference>
<dbReference type="RefSeq" id="NP_001026920.1">
    <property type="nucleotide sequence ID" value="NM_001031750.1"/>
</dbReference>
<dbReference type="SMR" id="Q6VFT7"/>
<dbReference type="FunCoup" id="Q6VFT7">
    <property type="interactions" value="72"/>
</dbReference>
<dbReference type="STRING" id="9913.ENSBTAP00000041814"/>
<dbReference type="PaxDb" id="9913-ENSBTAP00000041814"/>
<dbReference type="Ensembl" id="ENSBTAT00000044307.2">
    <property type="protein sequence ID" value="ENSBTAP00000041814.1"/>
    <property type="gene ID" value="ENSBTAG00000031277.2"/>
</dbReference>
<dbReference type="GeneID" id="281770"/>
<dbReference type="KEGG" id="bta:281770"/>
<dbReference type="CTD" id="668"/>
<dbReference type="VEuPathDB" id="HostDB:ENSBTAG00000031277"/>
<dbReference type="VGNC" id="VGNC:29093">
    <property type="gene designation" value="FOXL2"/>
</dbReference>
<dbReference type="eggNOG" id="KOG2294">
    <property type="taxonomic scope" value="Eukaryota"/>
</dbReference>
<dbReference type="GeneTree" id="ENSGT00940000162075"/>
<dbReference type="HOGENOM" id="CLU_023357_1_0_1"/>
<dbReference type="InParanoid" id="Q6VFT7"/>
<dbReference type="OMA" id="CSYWEHE"/>
<dbReference type="OrthoDB" id="6230630at2759"/>
<dbReference type="TreeFam" id="TF316127"/>
<dbReference type="Reactome" id="R-BTA-3232118">
    <property type="pathway name" value="SUMOylation of transcription factors"/>
</dbReference>
<dbReference type="Proteomes" id="UP000009136">
    <property type="component" value="Chromosome 1"/>
</dbReference>
<dbReference type="Bgee" id="ENSBTAG00000031277">
    <property type="expression patterns" value="Expressed in granulosa cell and 30 other cell types or tissues"/>
</dbReference>
<dbReference type="GO" id="GO:0090543">
    <property type="term" value="C:Flemming body"/>
    <property type="evidence" value="ECO:0007669"/>
    <property type="project" value="Ensembl"/>
</dbReference>
<dbReference type="GO" id="GO:0005654">
    <property type="term" value="C:nucleoplasm"/>
    <property type="evidence" value="ECO:0007669"/>
    <property type="project" value="Ensembl"/>
</dbReference>
<dbReference type="GO" id="GO:0005634">
    <property type="term" value="C:nucleus"/>
    <property type="evidence" value="ECO:0000250"/>
    <property type="project" value="AgBase"/>
</dbReference>
<dbReference type="GO" id="GO:0043028">
    <property type="term" value="F:cysteine-type endopeptidase regulator activity involved in apoptotic process"/>
    <property type="evidence" value="ECO:0000250"/>
    <property type="project" value="UniProtKB"/>
</dbReference>
<dbReference type="GO" id="GO:0003677">
    <property type="term" value="F:DNA binding"/>
    <property type="evidence" value="ECO:0000250"/>
    <property type="project" value="AgBase"/>
</dbReference>
<dbReference type="GO" id="GO:0003700">
    <property type="term" value="F:DNA-binding transcription factor activity"/>
    <property type="evidence" value="ECO:0000250"/>
    <property type="project" value="AgBase"/>
</dbReference>
<dbReference type="GO" id="GO:0000981">
    <property type="term" value="F:DNA-binding transcription factor activity, RNA polymerase II-specific"/>
    <property type="evidence" value="ECO:0000318"/>
    <property type="project" value="GO_Central"/>
</dbReference>
<dbReference type="GO" id="GO:0000978">
    <property type="term" value="F:RNA polymerase II cis-regulatory region sequence-specific DNA binding"/>
    <property type="evidence" value="ECO:0000318"/>
    <property type="project" value="GO_Central"/>
</dbReference>
<dbReference type="GO" id="GO:0031624">
    <property type="term" value="F:ubiquitin conjugating enzyme binding"/>
    <property type="evidence" value="ECO:0007669"/>
    <property type="project" value="Ensembl"/>
</dbReference>
<dbReference type="GO" id="GO:0009653">
    <property type="term" value="P:anatomical structure morphogenesis"/>
    <property type="evidence" value="ECO:0000318"/>
    <property type="project" value="GO_Central"/>
</dbReference>
<dbReference type="GO" id="GO:0006309">
    <property type="term" value="P:apoptotic DNA fragmentation"/>
    <property type="evidence" value="ECO:0000250"/>
    <property type="project" value="UniProtKB"/>
</dbReference>
<dbReference type="GO" id="GO:0030154">
    <property type="term" value="P:cell differentiation"/>
    <property type="evidence" value="ECO:0000318"/>
    <property type="project" value="GO_Central"/>
</dbReference>
<dbReference type="GO" id="GO:0048048">
    <property type="term" value="P:embryonic eye morphogenesis"/>
    <property type="evidence" value="ECO:0000250"/>
    <property type="project" value="AgBase"/>
</dbReference>
<dbReference type="GO" id="GO:0002074">
    <property type="term" value="P:extraocular skeletal muscle development"/>
    <property type="evidence" value="ECO:0000250"/>
    <property type="project" value="UniProtKB"/>
</dbReference>
<dbReference type="GO" id="GO:0019101">
    <property type="term" value="P:female somatic sex determination"/>
    <property type="evidence" value="ECO:0000250"/>
    <property type="project" value="AgBase"/>
</dbReference>
<dbReference type="GO" id="GO:0060014">
    <property type="term" value="P:granulosa cell differentiation"/>
    <property type="evidence" value="ECO:0000250"/>
    <property type="project" value="AgBase"/>
</dbReference>
<dbReference type="GO" id="GO:0045892">
    <property type="term" value="P:negative regulation of DNA-templated transcription"/>
    <property type="evidence" value="ECO:0007669"/>
    <property type="project" value="Ensembl"/>
</dbReference>
<dbReference type="GO" id="GO:0001541">
    <property type="term" value="P:ovarian follicle development"/>
    <property type="evidence" value="ECO:0000250"/>
    <property type="project" value="AgBase"/>
</dbReference>
<dbReference type="GO" id="GO:0043065">
    <property type="term" value="P:positive regulation of apoptotic process"/>
    <property type="evidence" value="ECO:0000250"/>
    <property type="project" value="UniProtKB"/>
</dbReference>
<dbReference type="GO" id="GO:0045893">
    <property type="term" value="P:positive regulation of DNA-templated transcription"/>
    <property type="evidence" value="ECO:0000250"/>
    <property type="project" value="UniProtKB"/>
</dbReference>
<dbReference type="GO" id="GO:0045944">
    <property type="term" value="P:positive regulation of transcription by RNA polymerase II"/>
    <property type="evidence" value="ECO:0000250"/>
    <property type="project" value="AgBase"/>
</dbReference>
<dbReference type="GO" id="GO:0006357">
    <property type="term" value="P:regulation of transcription by RNA polymerase II"/>
    <property type="evidence" value="ECO:0000318"/>
    <property type="project" value="GO_Central"/>
</dbReference>
<dbReference type="CDD" id="cd20028">
    <property type="entry name" value="FH_FOXL2"/>
    <property type="match status" value="1"/>
</dbReference>
<dbReference type="FunFam" id="1.10.10.10:FF:000016">
    <property type="entry name" value="Forkhead box protein I1"/>
    <property type="match status" value="1"/>
</dbReference>
<dbReference type="Gene3D" id="1.10.10.10">
    <property type="entry name" value="Winged helix-like DNA-binding domain superfamily/Winged helix DNA-binding domain"/>
    <property type="match status" value="1"/>
</dbReference>
<dbReference type="InterPro" id="IPR047515">
    <property type="entry name" value="FH_FOXL2"/>
</dbReference>
<dbReference type="InterPro" id="IPR001766">
    <property type="entry name" value="Fork_head_dom"/>
</dbReference>
<dbReference type="InterPro" id="IPR050211">
    <property type="entry name" value="FOX_domain-containing"/>
</dbReference>
<dbReference type="InterPro" id="IPR018122">
    <property type="entry name" value="TF_fork_head_CS_1"/>
</dbReference>
<dbReference type="InterPro" id="IPR030456">
    <property type="entry name" value="TF_fork_head_CS_2"/>
</dbReference>
<dbReference type="InterPro" id="IPR036388">
    <property type="entry name" value="WH-like_DNA-bd_sf"/>
</dbReference>
<dbReference type="InterPro" id="IPR036390">
    <property type="entry name" value="WH_DNA-bd_sf"/>
</dbReference>
<dbReference type="PANTHER" id="PTHR11829">
    <property type="entry name" value="FORKHEAD BOX PROTEIN"/>
    <property type="match status" value="1"/>
</dbReference>
<dbReference type="PANTHER" id="PTHR11829:SF411">
    <property type="entry name" value="FORKHEAD BOX PROTEIN L2"/>
    <property type="match status" value="1"/>
</dbReference>
<dbReference type="Pfam" id="PF00250">
    <property type="entry name" value="Forkhead"/>
    <property type="match status" value="1"/>
</dbReference>
<dbReference type="PRINTS" id="PR00053">
    <property type="entry name" value="FORKHEAD"/>
</dbReference>
<dbReference type="SMART" id="SM00339">
    <property type="entry name" value="FH"/>
    <property type="match status" value="1"/>
</dbReference>
<dbReference type="SUPFAM" id="SSF46785">
    <property type="entry name" value="Winged helix' DNA-binding domain"/>
    <property type="match status" value="1"/>
</dbReference>
<dbReference type="PROSITE" id="PS00657">
    <property type="entry name" value="FORK_HEAD_1"/>
    <property type="match status" value="1"/>
</dbReference>
<dbReference type="PROSITE" id="PS00658">
    <property type="entry name" value="FORK_HEAD_2"/>
    <property type="match status" value="1"/>
</dbReference>
<dbReference type="PROSITE" id="PS50039">
    <property type="entry name" value="FORK_HEAD_3"/>
    <property type="match status" value="1"/>
</dbReference>
<protein>
    <recommendedName>
        <fullName>Forkhead box protein L2</fullName>
    </recommendedName>
</protein>
<organism>
    <name type="scientific">Bos taurus</name>
    <name type="common">Bovine</name>
    <dbReference type="NCBI Taxonomy" id="9913"/>
    <lineage>
        <taxon>Eukaryota</taxon>
        <taxon>Metazoa</taxon>
        <taxon>Chordata</taxon>
        <taxon>Craniata</taxon>
        <taxon>Vertebrata</taxon>
        <taxon>Euteleostomi</taxon>
        <taxon>Mammalia</taxon>
        <taxon>Eutheria</taxon>
        <taxon>Laurasiatheria</taxon>
        <taxon>Artiodactyla</taxon>
        <taxon>Ruminantia</taxon>
        <taxon>Pecora</taxon>
        <taxon>Bovidae</taxon>
        <taxon>Bovinae</taxon>
        <taxon>Bos</taxon>
    </lineage>
</organism>
<proteinExistence type="evidence at transcript level"/>
<reference key="1">
    <citation type="journal article" date="2003" name="Cytogenet. Genome Res.">
        <title>Structure, evolution and expression of the FOXL2 transcription unit.</title>
        <authorList>
            <person name="Cocquet J."/>
            <person name="De Baere E."/>
            <person name="Gareil M."/>
            <person name="Pannetier M."/>
            <person name="Xia X."/>
            <person name="Fellous M."/>
            <person name="Veitia R.A."/>
        </authorList>
    </citation>
    <scope>NUCLEOTIDE SEQUENCE [GENOMIC DNA]</scope>
</reference>
<reference key="2">
    <citation type="submission" date="2002-05" db="EMBL/GenBank/DDBJ databases">
        <title>Bos taurus forkhead transcription factor (FOXL2) DNA binding domain.</title>
        <authorList>
            <person name="Valdez K.E."/>
            <person name="Turzillo A.M."/>
        </authorList>
    </citation>
    <scope>NUCLEOTIDE SEQUENCE [MRNA] OF 55-142</scope>
</reference>
<keyword id="KW-0221">Differentiation</keyword>
<keyword id="KW-0238">DNA-binding</keyword>
<keyword id="KW-1017">Isopeptide bond</keyword>
<keyword id="KW-0539">Nucleus</keyword>
<keyword id="KW-0597">Phosphoprotein</keyword>
<keyword id="KW-1185">Reference proteome</keyword>
<keyword id="KW-0804">Transcription</keyword>
<keyword id="KW-0805">Transcription regulation</keyword>
<keyword id="KW-0832">Ubl conjugation</keyword>
<gene>
    <name type="primary">FOXL2</name>
</gene>
<name>FOXL2_BOVIN</name>
<evidence type="ECO:0000250" key="1"/>
<evidence type="ECO:0000250" key="2">
    <source>
        <dbReference type="UniProtKB" id="P58012"/>
    </source>
</evidence>
<evidence type="ECO:0000255" key="3">
    <source>
        <dbReference type="PROSITE-ProRule" id="PRU00089"/>
    </source>
</evidence>
<evidence type="ECO:0000256" key="4">
    <source>
        <dbReference type="SAM" id="MobiDB-lite"/>
    </source>
</evidence>
<comment type="function">
    <text evidence="1">Transcriptional regulator. Critical factor essential for ovary differentiation and maintenance, and repression of the genetic program for somatic testis determination (By similarity). Prevents trans-differentiation of ovary to testis through transcriptional repression of the Sertoli cell-promoting gene SOX9 (By similarity). Has apoptotic activity in ovarian cells (By similarity). Suppresses ESR1-mediated transcription of PTGS2/COX2 stimulated by tamoxifen (By similarity). Activates SIRT1 transcription under cellular stress conditions (By similarity). Activates transcription of OSR2 (By similarity). Is a regulator of CYP19 expression (By similarity). Is a transcriptional repressor of STAR (By similarity). Participates in SMAD3-dependent transcription of FST via the intronic SMAD-binding element (By similarity).</text>
</comment>
<comment type="subunit">
    <text evidence="1">Interacts with ESR1. Interacts with UBE2I/UBC9. Interacts with SMAD3. Interacts with DDX20.</text>
</comment>
<comment type="subcellular location">
    <subcellularLocation>
        <location evidence="3">Nucleus</location>
    </subcellularLocation>
</comment>
<comment type="PTM">
    <text evidence="1">Sumoylated with SUMO1; sumoylation is required for transcriptional repression activity.</text>
</comment>